<feature type="chain" id="PRO_0000308458" description="Processive diacylglycerol beta-glucosyltransferase">
    <location>
        <begin position="1"/>
        <end position="391"/>
    </location>
</feature>
<dbReference type="EC" id="2.4.1.315"/>
<dbReference type="EMBL" id="BX571857">
    <property type="protein sequence ID" value="CAG42661.1"/>
    <property type="molecule type" value="Genomic_DNA"/>
</dbReference>
<dbReference type="RefSeq" id="WP_000258650.1">
    <property type="nucleotide sequence ID" value="NC_002953.3"/>
</dbReference>
<dbReference type="SMR" id="Q6GAR0"/>
<dbReference type="CAZy" id="GT28">
    <property type="family name" value="Glycosyltransferase Family 28"/>
</dbReference>
<dbReference type="KEGG" id="sas:SAS0886"/>
<dbReference type="HOGENOM" id="CLU_028367_0_1_9"/>
<dbReference type="UniPathway" id="UPA00894"/>
<dbReference type="GO" id="GO:0005886">
    <property type="term" value="C:plasma membrane"/>
    <property type="evidence" value="ECO:0007669"/>
    <property type="project" value="UniProtKB-SubCell"/>
</dbReference>
<dbReference type="GO" id="GO:0047228">
    <property type="term" value="F:1,2-diacylglycerol 3-glucosyltransferase activity"/>
    <property type="evidence" value="ECO:0007669"/>
    <property type="project" value="UniProtKB-UniRule"/>
</dbReference>
<dbReference type="GO" id="GO:0009246">
    <property type="term" value="P:enterobacterial common antigen biosynthetic process"/>
    <property type="evidence" value="ECO:0007669"/>
    <property type="project" value="UniProtKB-UniPathway"/>
</dbReference>
<dbReference type="GO" id="GO:0009247">
    <property type="term" value="P:glycolipid biosynthetic process"/>
    <property type="evidence" value="ECO:0007669"/>
    <property type="project" value="UniProtKB-UniRule"/>
</dbReference>
<dbReference type="GO" id="GO:0070395">
    <property type="term" value="P:lipoteichoic acid biosynthetic process"/>
    <property type="evidence" value="ECO:0007669"/>
    <property type="project" value="UniProtKB-UniRule"/>
</dbReference>
<dbReference type="CDD" id="cd17507">
    <property type="entry name" value="GT28_Beta-DGS-like"/>
    <property type="match status" value="1"/>
</dbReference>
<dbReference type="Gene3D" id="3.40.50.2000">
    <property type="entry name" value="Glycogen Phosphorylase B"/>
    <property type="match status" value="2"/>
</dbReference>
<dbReference type="HAMAP" id="MF_01280">
    <property type="entry name" value="Diacylglyc_glucosyltr"/>
    <property type="match status" value="1"/>
</dbReference>
<dbReference type="InterPro" id="IPR009695">
    <property type="entry name" value="Diacylglyc_glucosyltr_N"/>
</dbReference>
<dbReference type="InterPro" id="IPR007235">
    <property type="entry name" value="Glyco_trans_28_C"/>
</dbReference>
<dbReference type="InterPro" id="IPR050519">
    <property type="entry name" value="Glycosyltransf_28_UgtP"/>
</dbReference>
<dbReference type="InterPro" id="IPR023589">
    <property type="entry name" value="Pro_diacylglycrl_glcsylTrfase"/>
</dbReference>
<dbReference type="NCBIfam" id="NF010134">
    <property type="entry name" value="PRK13608.1"/>
    <property type="match status" value="1"/>
</dbReference>
<dbReference type="PANTHER" id="PTHR43025">
    <property type="entry name" value="MONOGALACTOSYLDIACYLGLYCEROL SYNTHASE"/>
    <property type="match status" value="1"/>
</dbReference>
<dbReference type="PANTHER" id="PTHR43025:SF3">
    <property type="entry name" value="MONOGALACTOSYLDIACYLGLYCEROL SYNTHASE 1, CHLOROPLASTIC"/>
    <property type="match status" value="1"/>
</dbReference>
<dbReference type="Pfam" id="PF04101">
    <property type="entry name" value="Glyco_tran_28_C"/>
    <property type="match status" value="1"/>
</dbReference>
<dbReference type="Pfam" id="PF06925">
    <property type="entry name" value="MGDG_synth"/>
    <property type="match status" value="1"/>
</dbReference>
<dbReference type="SUPFAM" id="SSF53756">
    <property type="entry name" value="UDP-Glycosyltransferase/glycogen phosphorylase"/>
    <property type="match status" value="1"/>
</dbReference>
<sequence>MVTQNKKILIITGSFGNGHMQVTQSIVNQLNDMNLDHLSVIEHDLFMEAHPILTSICKKWYINSFKYFRNMYKGFYYSRPDKLDKCFYKYYGLNKLINLLIKEKPDLILLTFPTPVMSVLTEQFNINIPVATVMTDYRLHKNWITPYSTRYYVATKETKQDFIDVGIDPSTVKVTGIPIDNKFETPINQKQWLIDNNLDPDKQTILMSAGAFGVSKGFDTMITDILAKSANAQVVMICGKSKELKRSLTAKFKSNENVLILGYTKHMNEWMASSQLMITKPGGITITEGFARCIPMIFLNPAPGQELENALYFEEKGFGKIADTPEEAIKIVASLTNGNEQLTNMISTMEQDKIKYATQTICRDLLDLIGHSSQPQEIYGKVPLYARFFVK</sequence>
<comment type="function">
    <text evidence="1">Processive glucosyltransferase involved in the biosynthesis of both the bilayer- and non-bilayer-forming membrane glucolipids. Is able to successively transfer two glucosyl residues to diacylglycerol (DAG), thereby catalyzing the formation of beta-monoglucosyl-DAG (3-O-(beta-D-glucopyranosyl)-1,2-diacyl-sn-glycerol) and beta-diglucosyl-DAG (3-O-(beta-D-glucopyranosyl-beta-(1-&gt;6)-D-glucopyranosyl)-1,2-diacyl-sn-glycerol). Beta-diglucosyl-DAG is the predominant glycolipid found in Bacillales and is also used as a membrane anchor for lipoteichoic acid (LTA).</text>
</comment>
<comment type="catalytic activity">
    <reaction>
        <text>a 1,2-diacyl-3-O-(beta-D-glucopyranosyl)-sn-glycerol + UDP-alpha-D-glucose = a 1,2-diacyl-3-O-(beta-D-Glc-(1-&gt;6)-beta-D-Glc)-sn-glycerol + UDP + H(+)</text>
        <dbReference type="Rhea" id="RHEA:39031"/>
        <dbReference type="ChEBI" id="CHEBI:15378"/>
        <dbReference type="ChEBI" id="CHEBI:58223"/>
        <dbReference type="ChEBI" id="CHEBI:58885"/>
        <dbReference type="ChEBI" id="CHEBI:75799"/>
        <dbReference type="ChEBI" id="CHEBI:76264"/>
        <dbReference type="EC" id="2.4.1.315"/>
    </reaction>
</comment>
<comment type="catalytic activity">
    <reaction evidence="1">
        <text>a 1,2-diacyl-sn-glycerol + UDP-alpha-D-glucose = a 1,2-diacyl-3-O-(beta-D-glucopyranosyl)-sn-glycerol + UDP + H(+)</text>
        <dbReference type="Rhea" id="RHEA:17285"/>
        <dbReference type="ChEBI" id="CHEBI:15378"/>
        <dbReference type="ChEBI" id="CHEBI:17815"/>
        <dbReference type="ChEBI" id="CHEBI:58223"/>
        <dbReference type="ChEBI" id="CHEBI:58885"/>
        <dbReference type="ChEBI" id="CHEBI:75799"/>
    </reaction>
</comment>
<comment type="pathway">
    <text evidence="1">Glycolipid metabolism; diglucosyl-diacylglycerol biosynthesis.</text>
</comment>
<comment type="subcellular location">
    <subcellularLocation>
        <location evidence="1">Cell membrane</location>
    </subcellularLocation>
</comment>
<comment type="similarity">
    <text evidence="1">Belongs to the glycosyltransferase 28 family. UgtP subfamily.</text>
</comment>
<organism>
    <name type="scientific">Staphylococcus aureus (strain MSSA476)</name>
    <dbReference type="NCBI Taxonomy" id="282459"/>
    <lineage>
        <taxon>Bacteria</taxon>
        <taxon>Bacillati</taxon>
        <taxon>Bacillota</taxon>
        <taxon>Bacilli</taxon>
        <taxon>Bacillales</taxon>
        <taxon>Staphylococcaceae</taxon>
        <taxon>Staphylococcus</taxon>
    </lineage>
</organism>
<reference key="1">
    <citation type="journal article" date="2004" name="Proc. Natl. Acad. Sci. U.S.A.">
        <title>Complete genomes of two clinical Staphylococcus aureus strains: evidence for the rapid evolution of virulence and drug resistance.</title>
        <authorList>
            <person name="Holden M.T.G."/>
            <person name="Feil E.J."/>
            <person name="Lindsay J.A."/>
            <person name="Peacock S.J."/>
            <person name="Day N.P.J."/>
            <person name="Enright M.C."/>
            <person name="Foster T.J."/>
            <person name="Moore C.E."/>
            <person name="Hurst L."/>
            <person name="Atkin R."/>
            <person name="Barron A."/>
            <person name="Bason N."/>
            <person name="Bentley S.D."/>
            <person name="Chillingworth C."/>
            <person name="Chillingworth T."/>
            <person name="Churcher C."/>
            <person name="Clark L."/>
            <person name="Corton C."/>
            <person name="Cronin A."/>
            <person name="Doggett J."/>
            <person name="Dowd L."/>
            <person name="Feltwell T."/>
            <person name="Hance Z."/>
            <person name="Harris B."/>
            <person name="Hauser H."/>
            <person name="Holroyd S."/>
            <person name="Jagels K."/>
            <person name="James K.D."/>
            <person name="Lennard N."/>
            <person name="Line A."/>
            <person name="Mayes R."/>
            <person name="Moule S."/>
            <person name="Mungall K."/>
            <person name="Ormond D."/>
            <person name="Quail M.A."/>
            <person name="Rabbinowitsch E."/>
            <person name="Rutherford K.M."/>
            <person name="Sanders M."/>
            <person name="Sharp S."/>
            <person name="Simmonds M."/>
            <person name="Stevens K."/>
            <person name="Whitehead S."/>
            <person name="Barrell B.G."/>
            <person name="Spratt B.G."/>
            <person name="Parkhill J."/>
        </authorList>
    </citation>
    <scope>NUCLEOTIDE SEQUENCE [LARGE SCALE GENOMIC DNA]</scope>
    <source>
        <strain>MSSA476</strain>
    </source>
</reference>
<protein>
    <recommendedName>
        <fullName evidence="1">Processive diacylglycerol beta-glucosyltransferase</fullName>
        <ecNumber>2.4.1.315</ecNumber>
    </recommendedName>
    <alternativeName>
        <fullName evidence="1">Beta-diglucosyldiacylglycerol synthase</fullName>
        <shortName evidence="1">Beta-DGS</shortName>
        <shortName evidence="1">DGlcDAG synthase</shortName>
        <shortName evidence="1">Glc2-DAG synthase</shortName>
    </alternativeName>
    <alternativeName>
        <fullName evidence="1">Beta-gentiobiosyldiacylglycerol synthase</fullName>
    </alternativeName>
    <alternativeName>
        <fullName evidence="1">Beta-monoglucosyldiacylglycerol synthase</fullName>
        <shortName evidence="1">Beta-MGS</shortName>
        <shortName evidence="1">MGlcDAG synthase</shortName>
    </alternativeName>
    <alternativeName>
        <fullName>Diglucosyl diacylglycerol synthase (1,6-linking)</fullName>
    </alternativeName>
    <alternativeName>
        <fullName evidence="1">Glucosyl-beta-1,6-glucosyldiacylglycerol synthase</fullName>
    </alternativeName>
    <alternativeName>
        <fullName evidence="1">UDP glucosyltransferase</fullName>
    </alternativeName>
    <alternativeName>
        <fullName evidence="1">UDP-glucose:1,2-diacylglycerol-3-beta-D-glucosyltransferase</fullName>
    </alternativeName>
</protein>
<evidence type="ECO:0000255" key="1">
    <source>
        <dbReference type="HAMAP-Rule" id="MF_01280"/>
    </source>
</evidence>
<proteinExistence type="inferred from homology"/>
<accession>Q6GAR0</accession>
<keyword id="KW-0119">Carbohydrate metabolism</keyword>
<keyword id="KW-1003">Cell membrane</keyword>
<keyword id="KW-0328">Glycosyltransferase</keyword>
<keyword id="KW-0444">Lipid biosynthesis</keyword>
<keyword id="KW-0443">Lipid metabolism</keyword>
<keyword id="KW-0472">Membrane</keyword>
<keyword id="KW-0808">Transferase</keyword>
<gene>
    <name evidence="1" type="primary">ugtP</name>
    <name type="ordered locus">SAS0886</name>
</gene>
<name>UGTP_STAAS</name>